<evidence type="ECO:0000250" key="1">
    <source>
        <dbReference type="UniProtKB" id="P07437"/>
    </source>
</evidence>
<evidence type="ECO:0000250" key="2">
    <source>
        <dbReference type="UniProtKB" id="P68363"/>
    </source>
</evidence>
<evidence type="ECO:0000250" key="3">
    <source>
        <dbReference type="UniProtKB" id="P69893"/>
    </source>
</evidence>
<evidence type="ECO:0000250" key="4">
    <source>
        <dbReference type="UniProtKB" id="P99024"/>
    </source>
</evidence>
<evidence type="ECO:0000250" key="5">
    <source>
        <dbReference type="UniProtKB" id="Q13509"/>
    </source>
</evidence>
<evidence type="ECO:0000250" key="6">
    <source>
        <dbReference type="UniProtKB" id="Q2T9S0"/>
    </source>
</evidence>
<evidence type="ECO:0000250" key="7">
    <source>
        <dbReference type="UniProtKB" id="Q71U36"/>
    </source>
</evidence>
<evidence type="ECO:0000256" key="8">
    <source>
        <dbReference type="SAM" id="MobiDB-lite"/>
    </source>
</evidence>
<evidence type="ECO:0000303" key="9">
    <source>
    </source>
</evidence>
<evidence type="ECO:0000305" key="10"/>
<evidence type="ECO:0007744" key="11">
    <source>
    </source>
</evidence>
<organism>
    <name type="scientific">Rattus norvegicus</name>
    <name type="common">Rat</name>
    <dbReference type="NCBI Taxonomy" id="10116"/>
    <lineage>
        <taxon>Eukaryota</taxon>
        <taxon>Metazoa</taxon>
        <taxon>Chordata</taxon>
        <taxon>Craniata</taxon>
        <taxon>Vertebrata</taxon>
        <taxon>Euteleostomi</taxon>
        <taxon>Mammalia</taxon>
        <taxon>Eutheria</taxon>
        <taxon>Euarchontoglires</taxon>
        <taxon>Glires</taxon>
        <taxon>Rodentia</taxon>
        <taxon>Myomorpha</taxon>
        <taxon>Muroidea</taxon>
        <taxon>Muridae</taxon>
        <taxon>Murinae</taxon>
        <taxon>Rattus</taxon>
    </lineage>
</organism>
<comment type="function">
    <text>Tubulin is the major constituent of microtubules, a cylinder consisting of laterally associated linear protofilaments composed of alpha- and beta-tubulin heterodimers. Microtubules grow by the addition of GTP-tubulin dimers to the microtubule end, where a stabilizing cap forms. Below the cap, tubulin dimers are in GDP-bound state, owing to GTPase activity of alpha-tubulin.</text>
</comment>
<comment type="cofactor">
    <cofactor evidence="2">
        <name>Mg(2+)</name>
        <dbReference type="ChEBI" id="CHEBI:18420"/>
    </cofactor>
</comment>
<comment type="subunit">
    <text evidence="1 3 4">Heterodimer of alpha and beta chains. A typical microtubule is a hollow water-filled tube with an outer diameter of 25 nm and an inner diameter of 15 nM. Alpha-beta heterodimers associate head-to-tail to form protofilaments running lengthwise along the microtubule wall with the beta-tubulin subunit facing the microtubule plus end conferring a structural polarity. Microtubules usually have 13 protofilaments but different protofilament numbers can be found in some organisms and specialized cells. Interacts with CIMAP3. Interacts with DIAPH1 (By similarity). Interacts with MX1 (By similarity). May interact with RNABP10 (By similarity). Interacts with CFAP157 (By similarity). Nascent tubulin polypeptide interacts (via beta-tubulin MREI motif) with TTC5/STRAP; this interaction results in tubulin mRNA-targeted degradation (By similarity).</text>
</comment>
<comment type="subcellular location">
    <subcellularLocation>
        <location evidence="1">Cytoplasm</location>
        <location evidence="1">Cytoskeleton</location>
    </subcellularLocation>
</comment>
<comment type="alternative products">
    <event type="alternative splicing"/>
    <isoform>
        <id>P69897-1</id>
        <name>1</name>
        <sequence type="displayed"/>
    </isoform>
    <isoform>
        <id>P69897-2</id>
        <name>2</name>
        <sequence type="described" ref="VSP_022491"/>
    </isoform>
</comment>
<comment type="tissue specificity">
    <text>Ubiquitously expressed with highest levels in spleen, thymus and immature brain.</text>
</comment>
<comment type="domain">
    <text evidence="1">The MREI motif is common among all beta-tubulin isoforms and may be critical for tubulin autoregulation.</text>
</comment>
<comment type="PTM">
    <text evidence="4">Some glutamate residues at the C-terminus are polyglycylated, resulting in polyglycine chains on the gamma-carboxyl group. Glycylation is mainly limited to tubulin incorporated into axonemes (cilia and flagella) whereas glutamylation is prevalent in neuronal cells, centrioles, axonemes, and the mitotic spindle. Both modifications can coexist on the same protein on adjacent residues, and lowering polyglycylation levels increases polyglutamylation, and reciprocally. Cilia and flagella glycylation is required for their stability and maintenance. Flagella glycylation controls sperm motility.</text>
</comment>
<comment type="PTM">
    <text evidence="4 7">Some glutamate residues at the C-terminus are polyglutamylated, resulting in polyglutamate chains on the gamma-carboxyl group (By similarity). Polyglutamylation plays a key role in microtubule severing by spastin (SPAST). SPAST preferentially recognizes and acts on microtubules decorated with short polyglutamate tails: severing activity by SPAST increases as the number of glutamates per tubulin rises from one to eight, but decreases beyond this glutamylation threshold (By similarity). Glutamylation is also involved in cilia motility (By similarity).</text>
</comment>
<comment type="PTM">
    <text evidence="1">Phosphorylated on Ser-172 by CDK1 during the cell cycle, from metaphase to telophase, but not in interphase. This phosphorylation inhibits tubulin incorporation into microtubules.</text>
</comment>
<comment type="similarity">
    <text evidence="10">Belongs to the tubulin family.</text>
</comment>
<proteinExistence type="evidence at protein level"/>
<gene>
    <name type="primary">Tubb5</name>
</gene>
<keyword id="KW-0007">Acetylation</keyword>
<keyword id="KW-0025">Alternative splicing</keyword>
<keyword id="KW-0963">Cytoplasm</keyword>
<keyword id="KW-0206">Cytoskeleton</keyword>
<keyword id="KW-0903">Direct protein sequencing</keyword>
<keyword id="KW-0342">GTP-binding</keyword>
<keyword id="KW-1017">Isopeptide bond</keyword>
<keyword id="KW-0460">Magnesium</keyword>
<keyword id="KW-0479">Metal-binding</keyword>
<keyword id="KW-0488">Methylation</keyword>
<keyword id="KW-0493">Microtubule</keyword>
<keyword id="KW-0547">Nucleotide-binding</keyword>
<keyword id="KW-0597">Phosphoprotein</keyword>
<keyword id="KW-1185">Reference proteome</keyword>
<keyword id="KW-0832">Ubl conjugation</keyword>
<name>TBB5_RAT</name>
<reference key="1">
    <citation type="journal article" date="1998" name="DNA Seq.">
        <title>Cloning and sequencing of the rat cDNAs encoding class I beta-tubulin.</title>
        <authorList>
            <person name="Usui H."/>
            <person name="Miyazaki Y."/>
            <person name="Xin D."/>
            <person name="Ichikawa T."/>
            <person name="Kumanishi T."/>
        </authorList>
    </citation>
    <scope>NUCLEOTIDE SEQUENCE [MRNA] (ISOFORM 1)</scope>
    <source>
        <strain>Sprague-Dawley</strain>
        <tissue>Brain</tissue>
    </source>
</reference>
<reference key="2">
    <citation type="journal article" date="2004" name="Genome Res.">
        <title>The genomic sequence and comparative analysis of the rat major histocompatibility complex.</title>
        <authorList>
            <person name="Hurt P."/>
            <person name="Walter L."/>
            <person name="Sudbrak R."/>
            <person name="Klages S."/>
            <person name="Mueller I."/>
            <person name="Shiina T."/>
            <person name="Inoko H."/>
            <person name="Lehrach H."/>
            <person name="Guenther E."/>
            <person name="Reinhardt R."/>
            <person name="Himmelbauer H."/>
        </authorList>
    </citation>
    <scope>NUCLEOTIDE SEQUENCE [LARGE SCALE GENOMIC DNA]</scope>
    <source>
        <strain>Brown Norway</strain>
    </source>
</reference>
<reference key="3">
    <citation type="journal article" date="2004" name="Genome Res.">
        <title>The status, quality, and expansion of the NIH full-length cDNA project: the Mammalian Gene Collection (MGC).</title>
        <authorList>
            <consortium name="The MGC Project Team"/>
        </authorList>
    </citation>
    <scope>NUCLEOTIDE SEQUENCE [LARGE SCALE MRNA] (ISOFORM 2)</scope>
    <source>
        <tissue>Pituitary</tissue>
    </source>
</reference>
<reference key="4">
    <citation type="submission" date="2009-01" db="UniProtKB">
        <authorList>
            <person name="Lubec G."/>
            <person name="Afjehi-Sadat L."/>
            <person name="Chen W.-Q."/>
        </authorList>
    </citation>
    <scope>PROTEIN SEQUENCE OF 337-350 AND 363-390 (ISOFORMS 1/2)</scope>
    <scope>IDENTIFICATION BY MASS SPECTROMETRY</scope>
    <source>
        <strain>Sprague-Dawley</strain>
        <tissue>Hippocampus</tissue>
        <tissue>Spinal cord</tissue>
    </source>
</reference>
<reference key="5">
    <citation type="journal article" date="2012" name="Nat. Commun.">
        <title>Quantitative maps of protein phosphorylation sites across 14 different rat organs and tissues.</title>
        <authorList>
            <person name="Lundby A."/>
            <person name="Secher A."/>
            <person name="Lage K."/>
            <person name="Nordsborg N.B."/>
            <person name="Dmytriyev A."/>
            <person name="Lundby C."/>
            <person name="Olsen J.V."/>
        </authorList>
    </citation>
    <scope>PHOSPHORYLATION [LARGE SCALE ANALYSIS] AT THR-55</scope>
    <scope>IDENTIFICATION BY MASS SPECTROMETRY [LARGE SCALE ANALYSIS]</scope>
</reference>
<protein>
    <recommendedName>
        <fullName>Tubulin beta-5 chain</fullName>
    </recommendedName>
</protein>
<dbReference type="EMBL" id="AB011679">
    <property type="protein sequence ID" value="BAA32736.1"/>
    <property type="molecule type" value="mRNA"/>
</dbReference>
<dbReference type="EMBL" id="BX883048">
    <property type="protein sequence ID" value="CAE84031.1"/>
    <property type="molecule type" value="Genomic_DNA"/>
</dbReference>
<dbReference type="EMBL" id="BC060540">
    <property type="protein sequence ID" value="AAH60540.1"/>
    <property type="molecule type" value="mRNA"/>
</dbReference>
<dbReference type="PIR" id="A25113">
    <property type="entry name" value="A25113"/>
</dbReference>
<dbReference type="RefSeq" id="NP_775125.1">
    <molecule id="P69897-1"/>
    <property type="nucleotide sequence ID" value="NM_173102.2"/>
</dbReference>
<dbReference type="SMR" id="P69897"/>
<dbReference type="BioGRID" id="247892">
    <property type="interactions" value="11"/>
</dbReference>
<dbReference type="FunCoup" id="P69897">
    <property type="interactions" value="2693"/>
</dbReference>
<dbReference type="IntAct" id="P69897">
    <property type="interactions" value="5"/>
</dbReference>
<dbReference type="MINT" id="P69897"/>
<dbReference type="STRING" id="10116.ENSRNOP00000075269"/>
<dbReference type="CarbonylDB" id="P69897"/>
<dbReference type="GlyGen" id="P69897">
    <property type="glycosylation" value="1 site, 1 O-linked glycan (1 site)"/>
</dbReference>
<dbReference type="iPTMnet" id="P69897"/>
<dbReference type="PhosphoSitePlus" id="P69897"/>
<dbReference type="jPOST" id="P69897"/>
<dbReference type="PaxDb" id="10116-ENSRNOP00000001095"/>
<dbReference type="Ensembl" id="ENSRNOT00000084917.2">
    <molecule id="P69897-1"/>
    <property type="protein sequence ID" value="ENSRNOP00000072090.2"/>
    <property type="gene ID" value="ENSRNOG00000061216.2"/>
</dbReference>
<dbReference type="GeneID" id="29214"/>
<dbReference type="KEGG" id="rno:29214"/>
<dbReference type="UCSC" id="RGD:628596">
    <molecule id="P69897-1"/>
    <property type="organism name" value="rat"/>
</dbReference>
<dbReference type="AGR" id="RGD:628596"/>
<dbReference type="CTD" id="22154"/>
<dbReference type="RGD" id="628596">
    <property type="gene designation" value="Tubb5"/>
</dbReference>
<dbReference type="eggNOG" id="KOG1375">
    <property type="taxonomic scope" value="Eukaryota"/>
</dbReference>
<dbReference type="GeneTree" id="ENSGT00940000154370"/>
<dbReference type="HOGENOM" id="CLU_015718_1_1_1"/>
<dbReference type="InParanoid" id="P69897"/>
<dbReference type="OMA" id="MANTTKY"/>
<dbReference type="OrthoDB" id="9987387at2759"/>
<dbReference type="PhylomeDB" id="P69897"/>
<dbReference type="TreeFam" id="TF300298"/>
<dbReference type="Reactome" id="R-RNO-2565942">
    <property type="pathway name" value="Regulation of PLK1 Activity at G2/M Transition"/>
</dbReference>
<dbReference type="Reactome" id="R-RNO-380259">
    <property type="pathway name" value="Loss of Nlp from mitotic centrosomes"/>
</dbReference>
<dbReference type="Reactome" id="R-RNO-380270">
    <property type="pathway name" value="Recruitment of mitotic centrosome proteins and complexes"/>
</dbReference>
<dbReference type="Reactome" id="R-RNO-380284">
    <property type="pathway name" value="Loss of proteins required for interphase microtubule organization from the centrosome"/>
</dbReference>
<dbReference type="Reactome" id="R-RNO-380320">
    <property type="pathway name" value="Recruitment of NuMA to mitotic centrosomes"/>
</dbReference>
<dbReference type="Reactome" id="R-RNO-5620912">
    <property type="pathway name" value="Anchoring of the basal body to the plasma membrane"/>
</dbReference>
<dbReference type="Reactome" id="R-RNO-6798695">
    <property type="pathway name" value="Neutrophil degranulation"/>
</dbReference>
<dbReference type="Reactome" id="R-RNO-8854518">
    <property type="pathway name" value="AURKA Activation by TPX2"/>
</dbReference>
<dbReference type="PRO" id="PR:P69897"/>
<dbReference type="Proteomes" id="UP000002494">
    <property type="component" value="Chromosome 20"/>
</dbReference>
<dbReference type="Bgee" id="ENSRNOG00000061216">
    <property type="expression patterns" value="Expressed in thymus and 20 other cell types or tissues"/>
</dbReference>
<dbReference type="GO" id="GO:0044297">
    <property type="term" value="C:cell body"/>
    <property type="evidence" value="ECO:0000266"/>
    <property type="project" value="RGD"/>
</dbReference>
<dbReference type="GO" id="GO:0005737">
    <property type="term" value="C:cytoplasm"/>
    <property type="evidence" value="ECO:0000266"/>
    <property type="project" value="RGD"/>
</dbReference>
<dbReference type="GO" id="GO:0036464">
    <property type="term" value="C:cytoplasmic ribonucleoprotein granule"/>
    <property type="evidence" value="ECO:0000266"/>
    <property type="project" value="RGD"/>
</dbReference>
<dbReference type="GO" id="GO:0045171">
    <property type="term" value="C:intercellular bridge"/>
    <property type="evidence" value="ECO:0007669"/>
    <property type="project" value="Ensembl"/>
</dbReference>
<dbReference type="GO" id="GO:0045121">
    <property type="term" value="C:membrane raft"/>
    <property type="evidence" value="ECO:0000314"/>
    <property type="project" value="CAFA"/>
</dbReference>
<dbReference type="GO" id="GO:0005874">
    <property type="term" value="C:microtubule"/>
    <property type="evidence" value="ECO:0000266"/>
    <property type="project" value="RGD"/>
</dbReference>
<dbReference type="GO" id="GO:0072686">
    <property type="term" value="C:mitotic spindle"/>
    <property type="evidence" value="ECO:0007669"/>
    <property type="project" value="Ensembl"/>
</dbReference>
<dbReference type="GO" id="GO:0005641">
    <property type="term" value="C:nuclear envelope lumen"/>
    <property type="evidence" value="ECO:0000266"/>
    <property type="project" value="RGD"/>
</dbReference>
<dbReference type="GO" id="GO:0005634">
    <property type="term" value="C:nucleus"/>
    <property type="evidence" value="ECO:0000266"/>
    <property type="project" value="RGD"/>
</dbReference>
<dbReference type="GO" id="GO:0032991">
    <property type="term" value="C:protein-containing complex"/>
    <property type="evidence" value="ECO:0000314"/>
    <property type="project" value="RGD"/>
</dbReference>
<dbReference type="GO" id="GO:0005525">
    <property type="term" value="F:GTP binding"/>
    <property type="evidence" value="ECO:0000318"/>
    <property type="project" value="GO_Central"/>
</dbReference>
<dbReference type="GO" id="GO:0032794">
    <property type="term" value="F:GTPase activating protein binding"/>
    <property type="evidence" value="ECO:0000353"/>
    <property type="project" value="RGD"/>
</dbReference>
<dbReference type="GO" id="GO:0003924">
    <property type="term" value="F:GTPase activity"/>
    <property type="evidence" value="ECO:0007669"/>
    <property type="project" value="InterPro"/>
</dbReference>
<dbReference type="GO" id="GO:0046872">
    <property type="term" value="F:metal ion binding"/>
    <property type="evidence" value="ECO:0007669"/>
    <property type="project" value="UniProtKB-KW"/>
</dbReference>
<dbReference type="GO" id="GO:0042288">
    <property type="term" value="F:MHC class I protein binding"/>
    <property type="evidence" value="ECO:0000266"/>
    <property type="project" value="RGD"/>
</dbReference>
<dbReference type="GO" id="GO:0019904">
    <property type="term" value="F:protein domain specific binding"/>
    <property type="evidence" value="ECO:0000353"/>
    <property type="project" value="RGD"/>
</dbReference>
<dbReference type="GO" id="GO:0044877">
    <property type="term" value="F:protein-containing complex binding"/>
    <property type="evidence" value="ECO:0000314"/>
    <property type="project" value="RGD"/>
</dbReference>
<dbReference type="GO" id="GO:0005200">
    <property type="term" value="F:structural constituent of cytoskeleton"/>
    <property type="evidence" value="ECO:0000266"/>
    <property type="project" value="RGD"/>
</dbReference>
<dbReference type="GO" id="GO:0031625">
    <property type="term" value="F:ubiquitin protein ligase binding"/>
    <property type="evidence" value="ECO:0000266"/>
    <property type="project" value="RGD"/>
</dbReference>
<dbReference type="GO" id="GO:0000226">
    <property type="term" value="P:microtubule cytoskeleton organization"/>
    <property type="evidence" value="ECO:0000318"/>
    <property type="project" value="GO_Central"/>
</dbReference>
<dbReference type="GO" id="GO:0007017">
    <property type="term" value="P:microtubule-based process"/>
    <property type="evidence" value="ECO:0000266"/>
    <property type="project" value="RGD"/>
</dbReference>
<dbReference type="GO" id="GO:0000278">
    <property type="term" value="P:mitotic cell cycle"/>
    <property type="evidence" value="ECO:0000318"/>
    <property type="project" value="GO_Central"/>
</dbReference>
<dbReference type="GO" id="GO:0071895">
    <property type="term" value="P:odontoblast differentiation"/>
    <property type="evidence" value="ECO:0000266"/>
    <property type="project" value="RGD"/>
</dbReference>
<dbReference type="GO" id="GO:0050807">
    <property type="term" value="P:regulation of synapse organization"/>
    <property type="evidence" value="ECO:0000266"/>
    <property type="project" value="RGD"/>
</dbReference>
<dbReference type="GO" id="GO:0051225">
    <property type="term" value="P:spindle assembly"/>
    <property type="evidence" value="ECO:0000266"/>
    <property type="project" value="RGD"/>
</dbReference>
<dbReference type="CDD" id="cd02187">
    <property type="entry name" value="beta_tubulin"/>
    <property type="match status" value="1"/>
</dbReference>
<dbReference type="FunFam" id="1.10.287.600:FF:000002">
    <property type="entry name" value="Tubulin beta chain"/>
    <property type="match status" value="1"/>
</dbReference>
<dbReference type="FunFam" id="3.30.1330.20:FF:000002">
    <property type="entry name" value="Tubulin beta chain"/>
    <property type="match status" value="1"/>
</dbReference>
<dbReference type="FunFam" id="3.40.50.1440:FF:000003">
    <property type="entry name" value="Tubulin beta chain"/>
    <property type="match status" value="1"/>
</dbReference>
<dbReference type="Gene3D" id="1.10.287.600">
    <property type="entry name" value="Helix hairpin bin"/>
    <property type="match status" value="1"/>
</dbReference>
<dbReference type="Gene3D" id="3.30.1330.20">
    <property type="entry name" value="Tubulin/FtsZ, C-terminal domain"/>
    <property type="match status" value="1"/>
</dbReference>
<dbReference type="Gene3D" id="3.40.50.1440">
    <property type="entry name" value="Tubulin/FtsZ, GTPase domain"/>
    <property type="match status" value="1"/>
</dbReference>
<dbReference type="InterPro" id="IPR013838">
    <property type="entry name" value="Beta-tubulin_BS"/>
</dbReference>
<dbReference type="InterPro" id="IPR002453">
    <property type="entry name" value="Beta_tubulin"/>
</dbReference>
<dbReference type="InterPro" id="IPR008280">
    <property type="entry name" value="Tub_FtsZ_C"/>
</dbReference>
<dbReference type="InterPro" id="IPR000217">
    <property type="entry name" value="Tubulin"/>
</dbReference>
<dbReference type="InterPro" id="IPR037103">
    <property type="entry name" value="Tubulin/FtsZ-like_C"/>
</dbReference>
<dbReference type="InterPro" id="IPR018316">
    <property type="entry name" value="Tubulin/FtsZ_2-layer-sand-dom"/>
</dbReference>
<dbReference type="InterPro" id="IPR036525">
    <property type="entry name" value="Tubulin/FtsZ_GTPase_sf"/>
</dbReference>
<dbReference type="InterPro" id="IPR023123">
    <property type="entry name" value="Tubulin_C"/>
</dbReference>
<dbReference type="InterPro" id="IPR017975">
    <property type="entry name" value="Tubulin_CS"/>
</dbReference>
<dbReference type="InterPro" id="IPR003008">
    <property type="entry name" value="Tubulin_FtsZ_GTPase"/>
</dbReference>
<dbReference type="PANTHER" id="PTHR11588">
    <property type="entry name" value="TUBULIN"/>
    <property type="match status" value="1"/>
</dbReference>
<dbReference type="Pfam" id="PF00091">
    <property type="entry name" value="Tubulin"/>
    <property type="match status" value="1"/>
</dbReference>
<dbReference type="Pfam" id="PF03953">
    <property type="entry name" value="Tubulin_C"/>
    <property type="match status" value="1"/>
</dbReference>
<dbReference type="PRINTS" id="PR01163">
    <property type="entry name" value="BETATUBULIN"/>
</dbReference>
<dbReference type="PRINTS" id="PR01161">
    <property type="entry name" value="TUBULIN"/>
</dbReference>
<dbReference type="SMART" id="SM00864">
    <property type="entry name" value="Tubulin"/>
    <property type="match status" value="1"/>
</dbReference>
<dbReference type="SMART" id="SM00865">
    <property type="entry name" value="Tubulin_C"/>
    <property type="match status" value="1"/>
</dbReference>
<dbReference type="SUPFAM" id="SSF55307">
    <property type="entry name" value="Tubulin C-terminal domain-like"/>
    <property type="match status" value="1"/>
</dbReference>
<dbReference type="SUPFAM" id="SSF52490">
    <property type="entry name" value="Tubulin nucleotide-binding domain-like"/>
    <property type="match status" value="1"/>
</dbReference>
<dbReference type="PROSITE" id="PS00227">
    <property type="entry name" value="TUBULIN"/>
    <property type="match status" value="1"/>
</dbReference>
<dbReference type="PROSITE" id="PS00228">
    <property type="entry name" value="TUBULIN_B_AUTOREG"/>
    <property type="match status" value="1"/>
</dbReference>
<feature type="chain" id="PRO_0000048247" description="Tubulin beta-5 chain">
    <location>
        <begin position="1"/>
        <end position="444"/>
    </location>
</feature>
<feature type="region of interest" description="Disordered" evidence="8">
    <location>
        <begin position="423"/>
        <end position="444"/>
    </location>
</feature>
<feature type="short sequence motif" description="MREI motif" evidence="1">
    <location>
        <begin position="1"/>
        <end position="4"/>
    </location>
</feature>
<feature type="compositionally biased region" description="Acidic residues" evidence="8">
    <location>
        <begin position="429"/>
        <end position="444"/>
    </location>
</feature>
<feature type="binding site" evidence="5">
    <location>
        <position position="11"/>
    </location>
    <ligand>
        <name>GTP</name>
        <dbReference type="ChEBI" id="CHEBI:37565"/>
    </ligand>
</feature>
<feature type="binding site" evidence="2">
    <location>
        <position position="69"/>
    </location>
    <ligand>
        <name>GTP</name>
        <dbReference type="ChEBI" id="CHEBI:37565"/>
    </ligand>
</feature>
<feature type="binding site" evidence="2">
    <location>
        <position position="69"/>
    </location>
    <ligand>
        <name>Mg(2+)</name>
        <dbReference type="ChEBI" id="CHEBI:18420"/>
    </ligand>
</feature>
<feature type="binding site" evidence="5">
    <location>
        <position position="138"/>
    </location>
    <ligand>
        <name>GTP</name>
        <dbReference type="ChEBI" id="CHEBI:37565"/>
    </ligand>
</feature>
<feature type="binding site" evidence="5">
    <location>
        <position position="142"/>
    </location>
    <ligand>
        <name>GTP</name>
        <dbReference type="ChEBI" id="CHEBI:37565"/>
    </ligand>
</feature>
<feature type="binding site" evidence="5">
    <location>
        <position position="143"/>
    </location>
    <ligand>
        <name>GTP</name>
        <dbReference type="ChEBI" id="CHEBI:37565"/>
    </ligand>
</feature>
<feature type="binding site" evidence="5">
    <location>
        <position position="144"/>
    </location>
    <ligand>
        <name>GTP</name>
        <dbReference type="ChEBI" id="CHEBI:37565"/>
    </ligand>
</feature>
<feature type="binding site" evidence="5">
    <location>
        <position position="204"/>
    </location>
    <ligand>
        <name>GTP</name>
        <dbReference type="ChEBI" id="CHEBI:37565"/>
    </ligand>
</feature>
<feature type="binding site" evidence="5">
    <location>
        <position position="226"/>
    </location>
    <ligand>
        <name>GTP</name>
        <dbReference type="ChEBI" id="CHEBI:37565"/>
    </ligand>
</feature>
<feature type="modified residue" description="Phosphoserine" evidence="4">
    <location>
        <position position="40"/>
    </location>
</feature>
<feature type="modified residue" description="Phosphothreonine" evidence="11">
    <location>
        <position position="55"/>
    </location>
</feature>
<feature type="modified residue" description="N6-acetyllysine; alternate" evidence="1">
    <location>
        <position position="58"/>
    </location>
</feature>
<feature type="modified residue" description="N6-succinyllysine; alternate" evidence="4">
    <location>
        <position position="58"/>
    </location>
</feature>
<feature type="modified residue" description="Phosphoserine; by CDK1" evidence="1">
    <location>
        <position position="172"/>
    </location>
</feature>
<feature type="modified residue" description="Phosphothreonine" evidence="1">
    <location>
        <position position="285"/>
    </location>
</feature>
<feature type="modified residue" description="Phosphothreonine" evidence="1">
    <location>
        <position position="290"/>
    </location>
</feature>
<feature type="modified residue" description="Omega-N-methylarginine" evidence="1">
    <location>
        <position position="318"/>
    </location>
</feature>
<feature type="modified residue" description="5-glutamyl polyglutamate" evidence="1">
    <location>
        <position position="434"/>
    </location>
</feature>
<feature type="modified residue" description="5-glutamyl glycine" evidence="1">
    <location>
        <position position="438"/>
    </location>
</feature>
<feature type="modified residue" description="5-glutamyl polyglutamate" evidence="6">
    <location>
        <position position="438"/>
    </location>
</feature>
<feature type="modified residue" description="5-glutamyl glycine" evidence="1">
    <location>
        <position position="439"/>
    </location>
</feature>
<feature type="modified residue" description="5-glutamyl polyglutamate" evidence="1">
    <location>
        <position position="439"/>
    </location>
</feature>
<feature type="modified residue" description="5-glutamyl glycine" evidence="1">
    <location>
        <position position="441"/>
    </location>
</feature>
<feature type="modified residue" description="5-glutamyl polyglutamate" evidence="1">
    <location>
        <position position="441"/>
    </location>
</feature>
<feature type="modified residue" description="5-glutamyl glycine" evidence="1">
    <location>
        <position position="442"/>
    </location>
</feature>
<feature type="modified residue" description="5-glutamyl glycine" evidence="1">
    <location>
        <position position="443"/>
    </location>
</feature>
<feature type="cross-link" description="Glycyl lysine isopeptide (Lys-Gly) (interchain with G-Cter in ubiquitin); alternate" evidence="1">
    <location>
        <position position="58"/>
    </location>
</feature>
<feature type="cross-link" description="Glycyl lysine isopeptide (Lys-Gly) (interchain with G-Cter in ubiquitin)" evidence="1">
    <location>
        <position position="324"/>
    </location>
</feature>
<feature type="splice variant" id="VSP_022491" description="In isoform 2." evidence="9">
    <location>
        <begin position="1"/>
        <end position="232"/>
    </location>
</feature>
<sequence length="444" mass="49671">MREIVHIQAGQCGNQIGAKFWEVISDEHGIDPTGTYHGDSDLQLDRISVYYNEATGGKYVPRAILVDLEPGTMDSVRSGPFGQIFRPDNFVFGQSGAGNNWAKGHYTEGAELVDSVLDVVRKEAESCDCLQGFQLTHSLGGGTGSGMGTLLISKIREEYPDRIMNTFSVVPSPKVSDTVVEPYNATLSVHQLVENTDETYCIDNEALYDICFRTLKLTTPTYGDLNHLVSATMSGVTTCLRFPGQLNADLRKLAVNMVPFPRLHFFMPGFAPLTSRGSQQYRALTVPELTQQVFDAKNMMAACDPRHGRYLTVAAVFRGRMSMKEVDEQMLNVQNKNSSYFVEWIPNNVKTAVCDIPPRGLKMAVTFIGNSTAIQELFKRISEQFTAMFRRKAFLHWYTGEGMDEMEFTEAESNMNDLVSEYQQYQDATAEEEEDFGEEAEEEA</sequence>
<accession>P69897</accession>
<accession>P05218</accession>
<accession>Q6P9X8</accession>
<accession>Q8WUC1</accession>
<accession>Q9CY33</accession>